<sequence>MKHKVKRIHFVGIGGAGMSGIAEVLVNLGYSVSGSDLGDSAATRRLKAMGAKVVLGHDAANVEAADALVVSTAVKNDNPEVIAARARHIPIVPRAQMLAELMRLKSGIAIAGTHGKTTTTSLVASILAEGAMDPTFVIGGRLNAAGANARLGKGDFLVAEADESDASFLMLSPVISVVTNIDADHMDTYGHDFARLKQAFVDFLQRLPFYGVAVLCEDDPHVRSIMPLVSKQVVRYGLSETANIRAENIRAEGGRMIFDVLRVNGSTTRLADVVLNLPGLHNVRNALAAIAVATEVQVPDEAIVKALAEFSGVGRRFQRYGEVAAPSGGTFTLIDDYGHHPVEMEATLAAARGAFPGRRLVLAFQPHRYTRTRDCFEDFVKVLSTVDALLLAEVYAAGEAPIVAADGRALSRALRVAGKVEPVFVEDIGGMPQAVLEAVRDGDVVITMGAGSIGAVPGKLASNEEQA</sequence>
<keyword id="KW-0067">ATP-binding</keyword>
<keyword id="KW-0131">Cell cycle</keyword>
<keyword id="KW-0132">Cell division</keyword>
<keyword id="KW-0133">Cell shape</keyword>
<keyword id="KW-0961">Cell wall biogenesis/degradation</keyword>
<keyword id="KW-0963">Cytoplasm</keyword>
<keyword id="KW-0436">Ligase</keyword>
<keyword id="KW-0547">Nucleotide-binding</keyword>
<keyword id="KW-0573">Peptidoglycan synthesis</keyword>
<keyword id="KW-1185">Reference proteome</keyword>
<feature type="chain" id="PRO_1000004308" description="UDP-N-acetylmuramate--L-alanine ligase">
    <location>
        <begin position="1"/>
        <end position="467"/>
    </location>
</feature>
<feature type="binding site" evidence="1">
    <location>
        <begin position="112"/>
        <end position="118"/>
    </location>
    <ligand>
        <name>ATP</name>
        <dbReference type="ChEBI" id="CHEBI:30616"/>
    </ligand>
</feature>
<gene>
    <name evidence="1" type="primary">murC</name>
    <name type="ordered locus">azo0885</name>
</gene>
<evidence type="ECO:0000255" key="1">
    <source>
        <dbReference type="HAMAP-Rule" id="MF_00046"/>
    </source>
</evidence>
<reference key="1">
    <citation type="journal article" date="2006" name="Nat. Biotechnol.">
        <title>Complete genome of the mutualistic, N2-fixing grass endophyte Azoarcus sp. strain BH72.</title>
        <authorList>
            <person name="Krause A."/>
            <person name="Ramakumar A."/>
            <person name="Bartels D."/>
            <person name="Battistoni F."/>
            <person name="Bekel T."/>
            <person name="Boch J."/>
            <person name="Boehm M."/>
            <person name="Friedrich F."/>
            <person name="Hurek T."/>
            <person name="Krause L."/>
            <person name="Linke B."/>
            <person name="McHardy A.C."/>
            <person name="Sarkar A."/>
            <person name="Schneiker S."/>
            <person name="Syed A.A."/>
            <person name="Thauer R."/>
            <person name="Vorhoelter F.-J."/>
            <person name="Weidner S."/>
            <person name="Puehler A."/>
            <person name="Reinhold-Hurek B."/>
            <person name="Kaiser O."/>
            <person name="Goesmann A."/>
        </authorList>
    </citation>
    <scope>NUCLEOTIDE SEQUENCE [LARGE SCALE GENOMIC DNA]</scope>
    <source>
        <strain>BH72</strain>
    </source>
</reference>
<accession>A1K3U7</accession>
<comment type="function">
    <text evidence="1">Cell wall formation.</text>
</comment>
<comment type="catalytic activity">
    <reaction evidence="1">
        <text>UDP-N-acetyl-alpha-D-muramate + L-alanine + ATP = UDP-N-acetyl-alpha-D-muramoyl-L-alanine + ADP + phosphate + H(+)</text>
        <dbReference type="Rhea" id="RHEA:23372"/>
        <dbReference type="ChEBI" id="CHEBI:15378"/>
        <dbReference type="ChEBI" id="CHEBI:30616"/>
        <dbReference type="ChEBI" id="CHEBI:43474"/>
        <dbReference type="ChEBI" id="CHEBI:57972"/>
        <dbReference type="ChEBI" id="CHEBI:70757"/>
        <dbReference type="ChEBI" id="CHEBI:83898"/>
        <dbReference type="ChEBI" id="CHEBI:456216"/>
        <dbReference type="EC" id="6.3.2.8"/>
    </reaction>
</comment>
<comment type="pathway">
    <text evidence="1">Cell wall biogenesis; peptidoglycan biosynthesis.</text>
</comment>
<comment type="subcellular location">
    <subcellularLocation>
        <location evidence="1">Cytoplasm</location>
    </subcellularLocation>
</comment>
<comment type="similarity">
    <text evidence="1">Belongs to the MurCDEF family.</text>
</comment>
<organism>
    <name type="scientific">Azoarcus sp. (strain BH72)</name>
    <dbReference type="NCBI Taxonomy" id="418699"/>
    <lineage>
        <taxon>Bacteria</taxon>
        <taxon>Pseudomonadati</taxon>
        <taxon>Pseudomonadota</taxon>
        <taxon>Betaproteobacteria</taxon>
        <taxon>Rhodocyclales</taxon>
        <taxon>Zoogloeaceae</taxon>
        <taxon>Azoarcus</taxon>
    </lineage>
</organism>
<proteinExistence type="inferred from homology"/>
<dbReference type="EC" id="6.3.2.8" evidence="1"/>
<dbReference type="EMBL" id="AM406670">
    <property type="protein sequence ID" value="CAL93502.1"/>
    <property type="molecule type" value="Genomic_DNA"/>
</dbReference>
<dbReference type="RefSeq" id="WP_011764619.1">
    <property type="nucleotide sequence ID" value="NC_008702.1"/>
</dbReference>
<dbReference type="SMR" id="A1K3U7"/>
<dbReference type="STRING" id="62928.azo0885"/>
<dbReference type="KEGG" id="azo:azo0885"/>
<dbReference type="eggNOG" id="COG0773">
    <property type="taxonomic scope" value="Bacteria"/>
</dbReference>
<dbReference type="HOGENOM" id="CLU_028104_2_2_4"/>
<dbReference type="UniPathway" id="UPA00219"/>
<dbReference type="Proteomes" id="UP000002588">
    <property type="component" value="Chromosome"/>
</dbReference>
<dbReference type="GO" id="GO:0005737">
    <property type="term" value="C:cytoplasm"/>
    <property type="evidence" value="ECO:0007669"/>
    <property type="project" value="UniProtKB-SubCell"/>
</dbReference>
<dbReference type="GO" id="GO:0005524">
    <property type="term" value="F:ATP binding"/>
    <property type="evidence" value="ECO:0007669"/>
    <property type="project" value="UniProtKB-UniRule"/>
</dbReference>
<dbReference type="GO" id="GO:0008763">
    <property type="term" value="F:UDP-N-acetylmuramate-L-alanine ligase activity"/>
    <property type="evidence" value="ECO:0007669"/>
    <property type="project" value="UniProtKB-UniRule"/>
</dbReference>
<dbReference type="GO" id="GO:0051301">
    <property type="term" value="P:cell division"/>
    <property type="evidence" value="ECO:0007669"/>
    <property type="project" value="UniProtKB-KW"/>
</dbReference>
<dbReference type="GO" id="GO:0071555">
    <property type="term" value="P:cell wall organization"/>
    <property type="evidence" value="ECO:0007669"/>
    <property type="project" value="UniProtKB-KW"/>
</dbReference>
<dbReference type="GO" id="GO:0009252">
    <property type="term" value="P:peptidoglycan biosynthetic process"/>
    <property type="evidence" value="ECO:0007669"/>
    <property type="project" value="UniProtKB-UniRule"/>
</dbReference>
<dbReference type="GO" id="GO:0008360">
    <property type="term" value="P:regulation of cell shape"/>
    <property type="evidence" value="ECO:0007669"/>
    <property type="project" value="UniProtKB-KW"/>
</dbReference>
<dbReference type="FunFam" id="3.40.1190.10:FF:000001">
    <property type="entry name" value="UDP-N-acetylmuramate--L-alanine ligase"/>
    <property type="match status" value="1"/>
</dbReference>
<dbReference type="Gene3D" id="3.90.190.20">
    <property type="entry name" value="Mur ligase, C-terminal domain"/>
    <property type="match status" value="1"/>
</dbReference>
<dbReference type="Gene3D" id="3.40.1190.10">
    <property type="entry name" value="Mur-like, catalytic domain"/>
    <property type="match status" value="1"/>
</dbReference>
<dbReference type="Gene3D" id="3.40.50.720">
    <property type="entry name" value="NAD(P)-binding Rossmann-like Domain"/>
    <property type="match status" value="1"/>
</dbReference>
<dbReference type="HAMAP" id="MF_00046">
    <property type="entry name" value="MurC"/>
    <property type="match status" value="1"/>
</dbReference>
<dbReference type="InterPro" id="IPR036565">
    <property type="entry name" value="Mur-like_cat_sf"/>
</dbReference>
<dbReference type="InterPro" id="IPR004101">
    <property type="entry name" value="Mur_ligase_C"/>
</dbReference>
<dbReference type="InterPro" id="IPR036615">
    <property type="entry name" value="Mur_ligase_C_dom_sf"/>
</dbReference>
<dbReference type="InterPro" id="IPR013221">
    <property type="entry name" value="Mur_ligase_cen"/>
</dbReference>
<dbReference type="InterPro" id="IPR000713">
    <property type="entry name" value="Mur_ligase_N"/>
</dbReference>
<dbReference type="InterPro" id="IPR050061">
    <property type="entry name" value="MurCDEF_pg_biosynth"/>
</dbReference>
<dbReference type="InterPro" id="IPR005758">
    <property type="entry name" value="UDP-N-AcMur_Ala_ligase_MurC"/>
</dbReference>
<dbReference type="NCBIfam" id="TIGR01082">
    <property type="entry name" value="murC"/>
    <property type="match status" value="1"/>
</dbReference>
<dbReference type="PANTHER" id="PTHR43445:SF3">
    <property type="entry name" value="UDP-N-ACETYLMURAMATE--L-ALANINE LIGASE"/>
    <property type="match status" value="1"/>
</dbReference>
<dbReference type="PANTHER" id="PTHR43445">
    <property type="entry name" value="UDP-N-ACETYLMURAMATE--L-ALANINE LIGASE-RELATED"/>
    <property type="match status" value="1"/>
</dbReference>
<dbReference type="Pfam" id="PF01225">
    <property type="entry name" value="Mur_ligase"/>
    <property type="match status" value="1"/>
</dbReference>
<dbReference type="Pfam" id="PF02875">
    <property type="entry name" value="Mur_ligase_C"/>
    <property type="match status" value="1"/>
</dbReference>
<dbReference type="Pfam" id="PF08245">
    <property type="entry name" value="Mur_ligase_M"/>
    <property type="match status" value="1"/>
</dbReference>
<dbReference type="SUPFAM" id="SSF51984">
    <property type="entry name" value="MurCD N-terminal domain"/>
    <property type="match status" value="1"/>
</dbReference>
<dbReference type="SUPFAM" id="SSF53623">
    <property type="entry name" value="MurD-like peptide ligases, catalytic domain"/>
    <property type="match status" value="1"/>
</dbReference>
<dbReference type="SUPFAM" id="SSF53244">
    <property type="entry name" value="MurD-like peptide ligases, peptide-binding domain"/>
    <property type="match status" value="1"/>
</dbReference>
<name>MURC_AZOSB</name>
<protein>
    <recommendedName>
        <fullName evidence="1">UDP-N-acetylmuramate--L-alanine ligase</fullName>
        <ecNumber evidence="1">6.3.2.8</ecNumber>
    </recommendedName>
    <alternativeName>
        <fullName evidence="1">UDP-N-acetylmuramoyl-L-alanine synthetase</fullName>
    </alternativeName>
</protein>